<organism>
    <name type="scientific">Mus musculus</name>
    <name type="common">Mouse</name>
    <dbReference type="NCBI Taxonomy" id="10090"/>
    <lineage>
        <taxon>Eukaryota</taxon>
        <taxon>Metazoa</taxon>
        <taxon>Chordata</taxon>
        <taxon>Craniata</taxon>
        <taxon>Vertebrata</taxon>
        <taxon>Euteleostomi</taxon>
        <taxon>Mammalia</taxon>
        <taxon>Eutheria</taxon>
        <taxon>Euarchontoglires</taxon>
        <taxon>Glires</taxon>
        <taxon>Rodentia</taxon>
        <taxon>Myomorpha</taxon>
        <taxon>Muroidea</taxon>
        <taxon>Muridae</taxon>
        <taxon>Murinae</taxon>
        <taxon>Mus</taxon>
        <taxon>Mus</taxon>
    </lineage>
</organism>
<accession>Q3TTP0</accession>
<gene>
    <name evidence="6" type="primary">Shcbp1l</name>
</gene>
<feature type="chain" id="PRO_0000284839" description="Testicular spindle-associated protein SHCBP1L">
    <location>
        <begin position="1"/>
        <end position="639"/>
    </location>
</feature>
<feature type="repeat" description="PbH1 1">
    <location>
        <begin position="479"/>
        <end position="500"/>
    </location>
</feature>
<feature type="repeat" description="PbH1 2">
    <location>
        <begin position="501"/>
        <end position="523"/>
    </location>
</feature>
<feature type="repeat" description="PbH1 3">
    <location>
        <begin position="524"/>
        <end position="557"/>
    </location>
</feature>
<feature type="repeat" description="PbH1 4">
    <location>
        <begin position="560"/>
        <end position="582"/>
    </location>
</feature>
<feature type="region of interest" description="Disordered" evidence="3">
    <location>
        <begin position="1"/>
        <end position="25"/>
    </location>
</feature>
<feature type="region of interest" description="Disordered" evidence="3">
    <location>
        <begin position="48"/>
        <end position="75"/>
    </location>
</feature>
<feature type="coiled-coil region" evidence="2">
    <location>
        <begin position="285"/>
        <end position="312"/>
    </location>
</feature>
<feature type="compositionally biased region" description="Basic residues" evidence="3">
    <location>
        <begin position="54"/>
        <end position="63"/>
    </location>
</feature>
<feature type="modified residue" description="O-acetylserine" evidence="4">
    <location>
        <position position="3"/>
    </location>
</feature>
<feature type="modified residue" description="Phosphoserine" evidence="1">
    <location>
        <position position="8"/>
    </location>
</feature>
<feature type="modified residue" description="Phosphoserine" evidence="7">
    <location>
        <position position="19"/>
    </location>
</feature>
<feature type="modified residue" description="Phosphoserine" evidence="4">
    <location>
        <position position="50"/>
    </location>
</feature>
<feature type="modified residue" description="N6-acetyllysine" evidence="4">
    <location>
        <position position="556"/>
    </location>
</feature>
<feature type="modified residue" description="N6-acetyllysine" evidence="4">
    <location>
        <position position="631"/>
    </location>
</feature>
<dbReference type="EMBL" id="AK161274">
    <property type="protein sequence ID" value="BAE36285.1"/>
    <property type="molecule type" value="mRNA"/>
</dbReference>
<dbReference type="EMBL" id="BC113157">
    <property type="protein sequence ID" value="AAI13158.1"/>
    <property type="molecule type" value="mRNA"/>
</dbReference>
<dbReference type="CCDS" id="CCDS15372.1"/>
<dbReference type="RefSeq" id="NP_001028334.1">
    <property type="nucleotide sequence ID" value="NM_001033162.2"/>
</dbReference>
<dbReference type="SMR" id="Q3TTP0"/>
<dbReference type="FunCoup" id="Q3TTP0">
    <property type="interactions" value="24"/>
</dbReference>
<dbReference type="STRING" id="10090.ENSMUSP00000036347"/>
<dbReference type="iPTMnet" id="Q3TTP0"/>
<dbReference type="PhosphoSitePlus" id="Q3TTP0"/>
<dbReference type="SwissPalm" id="Q3TTP0"/>
<dbReference type="PaxDb" id="10090-ENSMUSP00000036347"/>
<dbReference type="ProteomicsDB" id="257154"/>
<dbReference type="Antibodypedia" id="50328">
    <property type="antibodies" value="43 antibodies from 12 providers"/>
</dbReference>
<dbReference type="Ensembl" id="ENSMUST00000042373.12">
    <property type="protein sequence ID" value="ENSMUSP00000036347.6"/>
    <property type="gene ID" value="ENSMUSG00000042708.13"/>
</dbReference>
<dbReference type="GeneID" id="71836"/>
<dbReference type="KEGG" id="mmu:71836"/>
<dbReference type="UCSC" id="uc007czx.1">
    <property type="organism name" value="mouse"/>
</dbReference>
<dbReference type="AGR" id="MGI:1919086"/>
<dbReference type="CTD" id="81626"/>
<dbReference type="MGI" id="MGI:1919086">
    <property type="gene designation" value="Shcbp1l"/>
</dbReference>
<dbReference type="VEuPathDB" id="HostDB:ENSMUSG00000042708"/>
<dbReference type="eggNOG" id="ENOG502QT5S">
    <property type="taxonomic scope" value="Eukaryota"/>
</dbReference>
<dbReference type="GeneTree" id="ENSGT00940000161173"/>
<dbReference type="HOGENOM" id="CLU_022717_0_0_1"/>
<dbReference type="InParanoid" id="Q3TTP0"/>
<dbReference type="OMA" id="INLWCDM"/>
<dbReference type="OrthoDB" id="5978115at2759"/>
<dbReference type="PhylomeDB" id="Q3TTP0"/>
<dbReference type="TreeFam" id="TF329196"/>
<dbReference type="BioGRID-ORCS" id="71836">
    <property type="hits" value="2 hits in 77 CRISPR screens"/>
</dbReference>
<dbReference type="PRO" id="PR:Q3TTP0"/>
<dbReference type="Proteomes" id="UP000000589">
    <property type="component" value="Chromosome 1"/>
</dbReference>
<dbReference type="RNAct" id="Q3TTP0">
    <property type="molecule type" value="protein"/>
</dbReference>
<dbReference type="Bgee" id="ENSMUSG00000042708">
    <property type="expression patterns" value="Expressed in spermatocyte and 94 other cell types or tissues"/>
</dbReference>
<dbReference type="ExpressionAtlas" id="Q3TTP0">
    <property type="expression patterns" value="baseline and differential"/>
</dbReference>
<dbReference type="GO" id="GO:0005737">
    <property type="term" value="C:cytoplasm"/>
    <property type="evidence" value="ECO:0007669"/>
    <property type="project" value="UniProtKB-KW"/>
</dbReference>
<dbReference type="GO" id="GO:0072687">
    <property type="term" value="C:meiotic spindle"/>
    <property type="evidence" value="ECO:0000314"/>
    <property type="project" value="UniProtKB"/>
</dbReference>
<dbReference type="GO" id="GO:0030154">
    <property type="term" value="P:cell differentiation"/>
    <property type="evidence" value="ECO:0007669"/>
    <property type="project" value="UniProtKB-KW"/>
</dbReference>
<dbReference type="GO" id="GO:2001252">
    <property type="term" value="P:positive regulation of chromosome organization"/>
    <property type="evidence" value="ECO:0000315"/>
    <property type="project" value="UniProtKB"/>
</dbReference>
<dbReference type="GO" id="GO:0007283">
    <property type="term" value="P:spermatogenesis"/>
    <property type="evidence" value="ECO:0000315"/>
    <property type="project" value="UniProtKB"/>
</dbReference>
<dbReference type="FunFam" id="2.160.20.10:FF:000021">
    <property type="entry name" value="SHC binding and spindle associated 1 like"/>
    <property type="match status" value="1"/>
</dbReference>
<dbReference type="Gene3D" id="2.160.20.10">
    <property type="entry name" value="Single-stranded right-handed beta-helix, Pectin lyase-like"/>
    <property type="match status" value="1"/>
</dbReference>
<dbReference type="InterPro" id="IPR039448">
    <property type="entry name" value="Beta_helix"/>
</dbReference>
<dbReference type="InterPro" id="IPR006633">
    <property type="entry name" value="Carb-bd_sugar_hydrolysis-dom"/>
</dbReference>
<dbReference type="InterPro" id="IPR006626">
    <property type="entry name" value="PbH1"/>
</dbReference>
<dbReference type="InterPro" id="IPR012334">
    <property type="entry name" value="Pectin_lyas_fold"/>
</dbReference>
<dbReference type="InterPro" id="IPR011050">
    <property type="entry name" value="Pectin_lyase_fold/virulence"/>
</dbReference>
<dbReference type="InterPro" id="IPR045140">
    <property type="entry name" value="SHCBP1-like"/>
</dbReference>
<dbReference type="PANTHER" id="PTHR14695">
    <property type="entry name" value="SHC SH2-DOMAIN BINDING PROTEIN 1-RELATED"/>
    <property type="match status" value="1"/>
</dbReference>
<dbReference type="PANTHER" id="PTHR14695:SF7">
    <property type="entry name" value="TESTICULAR SPINDLE-ASSOCIATED PROTEIN SHCBP1L"/>
    <property type="match status" value="1"/>
</dbReference>
<dbReference type="Pfam" id="PF13229">
    <property type="entry name" value="Beta_helix"/>
    <property type="match status" value="1"/>
</dbReference>
<dbReference type="Pfam" id="PF23762">
    <property type="entry name" value="SHCBP_N"/>
    <property type="match status" value="1"/>
</dbReference>
<dbReference type="SMART" id="SM00722">
    <property type="entry name" value="CASH"/>
    <property type="match status" value="1"/>
</dbReference>
<dbReference type="SMART" id="SM00710">
    <property type="entry name" value="PbH1"/>
    <property type="match status" value="4"/>
</dbReference>
<dbReference type="SUPFAM" id="SSF51126">
    <property type="entry name" value="Pectin lyase-like"/>
    <property type="match status" value="1"/>
</dbReference>
<keyword id="KW-0007">Acetylation</keyword>
<keyword id="KW-0175">Coiled coil</keyword>
<keyword id="KW-0963">Cytoplasm</keyword>
<keyword id="KW-0206">Cytoskeleton</keyword>
<keyword id="KW-0221">Differentiation</keyword>
<keyword id="KW-0597">Phosphoprotein</keyword>
<keyword id="KW-1185">Reference proteome</keyword>
<keyword id="KW-0677">Repeat</keyword>
<keyword id="KW-0744">Spermatogenesis</keyword>
<sequence length="639" mass="70948">MESDATTSEPKASVGSDSSPAEQTVLATLRDSVAAPTRGFMSPVRSVVASPRPVKGKAARRRLQLPPVTQAETCDEEPVPAVPEDQEEAQPLPPIYASPMRGMWRSEKVALYCDQVLQGSKAEDAEEAMSRYLLEKLKAKDRWLGVWKSNPELFFEKYEEASIPFVGILVEVTCKPRQNLSSCFKVTVSVAEPFSSNIANIPRDLVDEVLGELEYSAPLLEVYPVDGQDADVRDIALALEVVRFFYDFLWRDWDDEENCENYTALIEERINLWCDIQDGTIPGPIAQRFKKTLEKYKNKRVELIEYQSNIKEDPSAAEAVECWKKYYEIVMLCGLLKMWEDLRLRVHGPFFPRILRRRKGKRDFGKTITHIVAKVMTTDMVKNLSSDTLLQQHNDLNLALDSCYSGDIVVIFPGEYQASNLALLTDDITIKGVGKREEIMITSEPSHDSFVVSKADNVKLMQLSLIQQGTVDGIVVVESGHLTLENCLLKCEGTGVCVLTGASLTITNSEITGAQGAGVELYPGSIAILEGNEIHHCNNLRTSDSSKSTLGGVNMKVLPAPKLKMTNNHIYNNNGYGVSILQPSEQFFIVAEAALNKGAASGDKKDDKMLSKVMQTLNVEMNNNRIEANLKGDIRIVTG</sequence>
<reference key="1">
    <citation type="journal article" date="2005" name="Science">
        <title>The transcriptional landscape of the mammalian genome.</title>
        <authorList>
            <person name="Carninci P."/>
            <person name="Kasukawa T."/>
            <person name="Katayama S."/>
            <person name="Gough J."/>
            <person name="Frith M.C."/>
            <person name="Maeda N."/>
            <person name="Oyama R."/>
            <person name="Ravasi T."/>
            <person name="Lenhard B."/>
            <person name="Wells C."/>
            <person name="Kodzius R."/>
            <person name="Shimokawa K."/>
            <person name="Bajic V.B."/>
            <person name="Brenner S.E."/>
            <person name="Batalov S."/>
            <person name="Forrest A.R."/>
            <person name="Zavolan M."/>
            <person name="Davis M.J."/>
            <person name="Wilming L.G."/>
            <person name="Aidinis V."/>
            <person name="Allen J.E."/>
            <person name="Ambesi-Impiombato A."/>
            <person name="Apweiler R."/>
            <person name="Aturaliya R.N."/>
            <person name="Bailey T.L."/>
            <person name="Bansal M."/>
            <person name="Baxter L."/>
            <person name="Beisel K.W."/>
            <person name="Bersano T."/>
            <person name="Bono H."/>
            <person name="Chalk A.M."/>
            <person name="Chiu K.P."/>
            <person name="Choudhary V."/>
            <person name="Christoffels A."/>
            <person name="Clutterbuck D.R."/>
            <person name="Crowe M.L."/>
            <person name="Dalla E."/>
            <person name="Dalrymple B.P."/>
            <person name="de Bono B."/>
            <person name="Della Gatta G."/>
            <person name="di Bernardo D."/>
            <person name="Down T."/>
            <person name="Engstrom P."/>
            <person name="Fagiolini M."/>
            <person name="Faulkner G."/>
            <person name="Fletcher C.F."/>
            <person name="Fukushima T."/>
            <person name="Furuno M."/>
            <person name="Futaki S."/>
            <person name="Gariboldi M."/>
            <person name="Georgii-Hemming P."/>
            <person name="Gingeras T.R."/>
            <person name="Gojobori T."/>
            <person name="Green R.E."/>
            <person name="Gustincich S."/>
            <person name="Harbers M."/>
            <person name="Hayashi Y."/>
            <person name="Hensch T.K."/>
            <person name="Hirokawa N."/>
            <person name="Hill D."/>
            <person name="Huminiecki L."/>
            <person name="Iacono M."/>
            <person name="Ikeo K."/>
            <person name="Iwama A."/>
            <person name="Ishikawa T."/>
            <person name="Jakt M."/>
            <person name="Kanapin A."/>
            <person name="Katoh M."/>
            <person name="Kawasawa Y."/>
            <person name="Kelso J."/>
            <person name="Kitamura H."/>
            <person name="Kitano H."/>
            <person name="Kollias G."/>
            <person name="Krishnan S.P."/>
            <person name="Kruger A."/>
            <person name="Kummerfeld S.K."/>
            <person name="Kurochkin I.V."/>
            <person name="Lareau L.F."/>
            <person name="Lazarevic D."/>
            <person name="Lipovich L."/>
            <person name="Liu J."/>
            <person name="Liuni S."/>
            <person name="McWilliam S."/>
            <person name="Madan Babu M."/>
            <person name="Madera M."/>
            <person name="Marchionni L."/>
            <person name="Matsuda H."/>
            <person name="Matsuzawa S."/>
            <person name="Miki H."/>
            <person name="Mignone F."/>
            <person name="Miyake S."/>
            <person name="Morris K."/>
            <person name="Mottagui-Tabar S."/>
            <person name="Mulder N."/>
            <person name="Nakano N."/>
            <person name="Nakauchi H."/>
            <person name="Ng P."/>
            <person name="Nilsson R."/>
            <person name="Nishiguchi S."/>
            <person name="Nishikawa S."/>
            <person name="Nori F."/>
            <person name="Ohara O."/>
            <person name="Okazaki Y."/>
            <person name="Orlando V."/>
            <person name="Pang K.C."/>
            <person name="Pavan W.J."/>
            <person name="Pavesi G."/>
            <person name="Pesole G."/>
            <person name="Petrovsky N."/>
            <person name="Piazza S."/>
            <person name="Reed J."/>
            <person name="Reid J.F."/>
            <person name="Ring B.Z."/>
            <person name="Ringwald M."/>
            <person name="Rost B."/>
            <person name="Ruan Y."/>
            <person name="Salzberg S.L."/>
            <person name="Sandelin A."/>
            <person name="Schneider C."/>
            <person name="Schoenbach C."/>
            <person name="Sekiguchi K."/>
            <person name="Semple C.A."/>
            <person name="Seno S."/>
            <person name="Sessa L."/>
            <person name="Sheng Y."/>
            <person name="Shibata Y."/>
            <person name="Shimada H."/>
            <person name="Shimada K."/>
            <person name="Silva D."/>
            <person name="Sinclair B."/>
            <person name="Sperling S."/>
            <person name="Stupka E."/>
            <person name="Sugiura K."/>
            <person name="Sultana R."/>
            <person name="Takenaka Y."/>
            <person name="Taki K."/>
            <person name="Tammoja K."/>
            <person name="Tan S.L."/>
            <person name="Tang S."/>
            <person name="Taylor M.S."/>
            <person name="Tegner J."/>
            <person name="Teichmann S.A."/>
            <person name="Ueda H.R."/>
            <person name="van Nimwegen E."/>
            <person name="Verardo R."/>
            <person name="Wei C.L."/>
            <person name="Yagi K."/>
            <person name="Yamanishi H."/>
            <person name="Zabarovsky E."/>
            <person name="Zhu S."/>
            <person name="Zimmer A."/>
            <person name="Hide W."/>
            <person name="Bult C."/>
            <person name="Grimmond S.M."/>
            <person name="Teasdale R.D."/>
            <person name="Liu E.T."/>
            <person name="Brusic V."/>
            <person name="Quackenbush J."/>
            <person name="Wahlestedt C."/>
            <person name="Mattick J.S."/>
            <person name="Hume D.A."/>
            <person name="Kai C."/>
            <person name="Sasaki D."/>
            <person name="Tomaru Y."/>
            <person name="Fukuda S."/>
            <person name="Kanamori-Katayama M."/>
            <person name="Suzuki M."/>
            <person name="Aoki J."/>
            <person name="Arakawa T."/>
            <person name="Iida J."/>
            <person name="Imamura K."/>
            <person name="Itoh M."/>
            <person name="Kato T."/>
            <person name="Kawaji H."/>
            <person name="Kawagashira N."/>
            <person name="Kawashima T."/>
            <person name="Kojima M."/>
            <person name="Kondo S."/>
            <person name="Konno H."/>
            <person name="Nakano K."/>
            <person name="Ninomiya N."/>
            <person name="Nishio T."/>
            <person name="Okada M."/>
            <person name="Plessy C."/>
            <person name="Shibata K."/>
            <person name="Shiraki T."/>
            <person name="Suzuki S."/>
            <person name="Tagami M."/>
            <person name="Waki K."/>
            <person name="Watahiki A."/>
            <person name="Okamura-Oho Y."/>
            <person name="Suzuki H."/>
            <person name="Kawai J."/>
            <person name="Hayashizaki Y."/>
        </authorList>
    </citation>
    <scope>NUCLEOTIDE SEQUENCE [LARGE SCALE MRNA]</scope>
    <source>
        <strain>C57BL/6J</strain>
        <tissue>Testis</tissue>
    </source>
</reference>
<reference key="2">
    <citation type="journal article" date="2004" name="Genome Res.">
        <title>The status, quality, and expansion of the NIH full-length cDNA project: the Mammalian Gene Collection (MGC).</title>
        <authorList>
            <consortium name="The MGC Project Team"/>
        </authorList>
    </citation>
    <scope>NUCLEOTIDE SEQUENCE [LARGE SCALE MRNA]</scope>
</reference>
<reference key="3">
    <citation type="journal article" date="2010" name="Cell">
        <title>A tissue-specific atlas of mouse protein phosphorylation and expression.</title>
        <authorList>
            <person name="Huttlin E.L."/>
            <person name="Jedrychowski M.P."/>
            <person name="Elias J.E."/>
            <person name="Goswami T."/>
            <person name="Rad R."/>
            <person name="Beausoleil S.A."/>
            <person name="Villen J."/>
            <person name="Haas W."/>
            <person name="Sowa M.E."/>
            <person name="Gygi S.P."/>
        </authorList>
    </citation>
    <scope>PHOSPHORYLATION [LARGE SCALE ANALYSIS] AT SER-19</scope>
    <scope>IDENTIFICATION BY MASS SPECTROMETRY [LARGE SCALE ANALYSIS]</scope>
    <source>
        <tissue>Testis</tissue>
    </source>
</reference>
<reference key="4">
    <citation type="journal article" date="2014" name="Mol. Hum. Reprod.">
        <title>SHCBP1L, a conserved protein in mammals, is predominantly expressed in male germ cells and maintains spindle stability during meiosis in testis.</title>
        <authorList>
            <person name="Liu M."/>
            <person name="Shi X."/>
            <person name="Bi Y."/>
            <person name="Qi L."/>
            <person name="Guo X."/>
            <person name="Wang L."/>
            <person name="Zhou Z."/>
            <person name="Sha J."/>
        </authorList>
    </citation>
    <scope>FUNCTION</scope>
    <scope>INTERACTION WITH HSPA2</scope>
    <scope>SUBCELLULAR LOCATION</scope>
    <scope>DISRUPTION PHENOTYPE</scope>
    <scope>ACETYLATION AT SER-3; LYS-556 AND LYS-631</scope>
    <scope>PHOSPHORYLATION AT SER-50</scope>
    <scope>TISSUE SPECIFICITY</scope>
    <scope>IDENTIFICATION BY MASS SPECTROMETRY</scope>
</reference>
<protein>
    <recommendedName>
        <fullName evidence="5">Testicular spindle-associated protein SHCBP1L</fullName>
    </recommendedName>
    <alternativeName>
        <fullName evidence="6">SHC SH2 domain-binding protein 1-like protein</fullName>
    </alternativeName>
</protein>
<comment type="function">
    <text evidence="4">Testis-specific spindle-associated factor that plays a role in spermatogenesis (PubMed:24557841). In association with HSPA2, participates in the maintenance of spindle integrity during meiosis in male germ cells (PubMed:24557841).</text>
</comment>
<comment type="subunit">
    <text evidence="4">Interacts with HSPA2; this interaction may promote the recruitment of HSPA2 to the spindle (PubMed:24557841).</text>
</comment>
<comment type="subcellular location">
    <subcellularLocation>
        <location evidence="4">Cytoplasm</location>
        <location evidence="4">Cytoskeleton</location>
        <location evidence="4">Spindle</location>
    </subcellularLocation>
    <text evidence="4">Colocalizes with alpha tubulin during meiosis (PubMed:24557841). Colocalizes with HSPA2 at spindle during the meiosis process (PubMed:24557841).</text>
</comment>
<comment type="tissue specificity">
    <text evidence="4">Expressed in pachytene spermatocytes and elongating spermatids inside the seminiferous tubules (PubMed:24557841). Not detected in ovary (at protein level) (PubMed:24557841). Testis-specific (PubMed:24557841).</text>
</comment>
<comment type="disruption phenotype">
    <text evidence="4">Male mice exhibit decreased fertility and produce reduced epididymal sperm content, but do not influence the rates of motility, capacitation and acrosome reaction of sperm (PubMed:24557841). Meiosis-arrested spermatocytes are increased in the early stages of meiosis and undergo programmed cell death (PubMed:24557841). Display a diminution of the HSPA2 signal at the spindle and disordered chromosomes during male meiosis (PubMed:24557841).</text>
</comment>
<evidence type="ECO:0000250" key="1">
    <source>
        <dbReference type="UniProtKB" id="Q9BZQ2"/>
    </source>
</evidence>
<evidence type="ECO:0000255" key="2"/>
<evidence type="ECO:0000256" key="3">
    <source>
        <dbReference type="SAM" id="MobiDB-lite"/>
    </source>
</evidence>
<evidence type="ECO:0000269" key="4">
    <source>
    </source>
</evidence>
<evidence type="ECO:0000305" key="5"/>
<evidence type="ECO:0000312" key="6">
    <source>
        <dbReference type="MGI" id="MGI:1919086"/>
    </source>
</evidence>
<evidence type="ECO:0007744" key="7">
    <source>
    </source>
</evidence>
<proteinExistence type="evidence at protein level"/>
<name>SHP1L_MOUSE</name>